<sequence>MLSKVLPVLLGILLILQSRVEGPQTESKNEASSRDVVYGPQPQPLENQLLSEETKSTETETGSRVGKLPEASRILNTILSNYDHKLRPGIGEKPTVVTVEISVNSLGPLSILDMEYTIDIIFSQTWYDERLCYNDTFESLVLNGNVVSQLWIPDTFFRNSKRTHEHEITMPNQMVRIYKDGKVLYTIRMTIDAGCSLHMLRFPMDSHSCPLSFSSFSYPENEMIYKWENFKLEINEKNSWKLFQFDFTGVSNKTEIITTPVGDFMVMTIFFNVSRRFGYVAFQNYVPSSVTTMLSWVSFWIKTESAPARTSLGITSVLTMTTLGTFSRKNFPRVSYITALDFYIAICFVFCFCALLEFAVLNFLIYNQTKAHASPKLRHPRINSRAHARTRARSRACARQHQEAFVCQIVTTEGSDGEERPSCSAQQPPSPGSPEGPRSLCSKLACCEWCKRFKKYFCMVPDCEGSTWQQGRLCIHVYRLDNYSRVVFPVTFFFFNVLYWLVCLNL</sequence>
<comment type="function">
    <text evidence="1 5 9 13 17">Epsilon subunit of the heteropentameric ligand-gated chloride channel gated by gamma-aminobutyric acid (GABA), a major inhibitory neurotransmitter in the brain (PubMed:16412217, PubMed:9882711). GABA-gated chloride channels, also named GABA(A) receptors (GABAAR), consist of five subunits arranged around a central pore and contain GABA active binding site(s) located at the alpha and beta subunit interfaces (By similarity). When activated by GABA, GABAARs selectively allow the flow of chloride anions across the cell membrane down their electrochemical gradient (By similarity). GABAARs containing epsilon subunits also permit spontaneous chloride channel activity while preserving the structural information required for GABA-gated openings (PubMed:16412217, PubMed:9882711). GABARs containing epsilon subunit may regulate cardiac function (Probable).</text>
</comment>
<comment type="catalytic activity">
    <reaction evidence="9 13">
        <text>chloride(in) = chloride(out)</text>
        <dbReference type="Rhea" id="RHEA:29823"/>
        <dbReference type="ChEBI" id="CHEBI:17996"/>
    </reaction>
</comment>
<comment type="activity regulation">
    <text evidence="9 13">Potentiated by pentobarbital, loreclezole, and lanthanum and inhibited by zinc and furosemide (PubMed:9882711). Introduction of the epsilon subunit to the receptor complex resulted in diminished modulatory effects by etomidate, propofol, pregnanolone and flurazepam (PubMed:16412217).</text>
</comment>
<comment type="subunit">
    <text evidence="9 13">Heteropentamer, formed by a combination of alpha (GABRA1-6), beta (GABRB1-3), gamma (GABRG1-3), delta (GABRD), epsilon (GABRE), rho (GABRR1-3), pi (GABRP) and theta (GABRQ) chains, each subunit exhibiting distinct physiological and pharmacological properties.</text>
</comment>
<comment type="subcellular location">
    <subcellularLocation>
        <location>Cell membrane</location>
        <topology evidence="6">Multi-pass membrane protein</topology>
    </subcellularLocation>
    <subcellularLocation>
        <location>Postsynaptic cell membrane</location>
        <topology evidence="6">Multi-pass membrane protein</topology>
    </subcellularLocation>
</comment>
<comment type="alternative products">
    <event type="alternative splicing"/>
    <isoform>
        <id>P78334-1</id>
        <name>1</name>
        <sequence type="displayed"/>
    </isoform>
    <isoform>
        <id>P78334-2</id>
        <name>2</name>
        <sequence type="described" ref="VSP_055776 VSP_055777"/>
    </isoform>
</comment>
<comment type="tissue specificity">
    <text evidence="11 12 13">Expressed in many tissues (PubMed:9339354). Highest levels of expression in adult heart and placenta (PubMed:9084408, PubMed:9339354, PubMed:9882711).</text>
</comment>
<comment type="domain">
    <text evidence="3">GABAARs subunits share a common topological structure: a peptide sequence made up of a long extracellular N-terminal, four transmembrane domains, intracellular or cytoplasmic domain located between the third and the fourth transmembrane domains.</text>
</comment>
<comment type="similarity">
    <text evidence="16">Belongs to the ligand-gated ion channel (TC 1.A.9) family. Gamma-aminobutyric acid receptor (TC 1.A.9.5) subfamily. GABRE sub-subfamily.</text>
</comment>
<protein>
    <recommendedName>
        <fullName>Gamma-aminobutyric acid receptor subunit epsilon</fullName>
    </recommendedName>
    <alternativeName>
        <fullName evidence="15">GABA(A) receptor subunit epsilon</fullName>
        <shortName evidence="2">GABAAR subunit epsilon</shortName>
    </alternativeName>
</protein>
<proteinExistence type="evidence at protein level"/>
<reference key="1">
    <citation type="journal article" date="1997" name="Nature">
        <title>Insensitivity to anaesthetic agents conferred by a class of GABA(A) receptor subunit.</title>
        <authorList>
            <person name="Davies P.A."/>
            <person name="Hanna M.C."/>
            <person name="Hales T.G."/>
            <person name="Kirkness E.F."/>
        </authorList>
    </citation>
    <scope>NUCLEOTIDE SEQUENCE [MRNA] (ISOFORM 1)</scope>
    <scope>VARIANT ALA-102</scope>
</reference>
<reference key="2">
    <citation type="journal article" date="1997" name="Genomics">
        <title>A gene in human chromosome band Xq28 (GABRE) defines a putative new subunit class of the GABAA neurotransmitter receptor.</title>
        <authorList>
            <person name="Wilke K."/>
            <person name="Gaul R."/>
            <person name="Klauck S.M."/>
            <person name="Poustka A."/>
        </authorList>
    </citation>
    <scope>NUCLEOTIDE SEQUENCE [GENOMIC DNA / MRNA] (ISOFORM 1)</scope>
    <scope>TISSUE SPECIFICITY</scope>
    <source>
        <tissue>Brain</tissue>
    </source>
</reference>
<reference key="3">
    <citation type="journal article" date="1997" name="J. Neurochem.">
        <title>An mRNA encoding a putative GABA-gated chloride channel is expressed in the human cardiac conduction system.</title>
        <authorList>
            <person name="Garret M."/>
            <person name="Bascles L."/>
            <person name="Boue-Grabot E."/>
            <person name="Sartor P."/>
            <person name="Charron G."/>
            <person name="Bloch B."/>
            <person name="Margolskee R.F."/>
        </authorList>
    </citation>
    <scope>NUCLEOTIDE SEQUENCE [MRNA] (ISOFORM 1)</scope>
    <scope>VARIANT ALA-102</scope>
    <scope>FUNCTION</scope>
    <scope>TISSUE SPECIFICITY</scope>
</reference>
<reference key="4">
    <citation type="submission" date="1998-01" db="EMBL/GenBank/DDBJ databases">
        <title>Alternative transcripts of a gene encoding the GABA-A receptor epsilon subunit on chromosome Xq28.</title>
        <authorList>
            <person name="Hanna M.C."/>
            <person name="Hales T.G."/>
            <person name="Kirkness E.F."/>
        </authorList>
    </citation>
    <scope>NUCLEOTIDE SEQUENCE [GENOMIC DNA]</scope>
</reference>
<reference key="5">
    <citation type="journal article" date="2005" name="Nature">
        <title>The DNA sequence of the human X chromosome.</title>
        <authorList>
            <person name="Ross M.T."/>
            <person name="Grafham D.V."/>
            <person name="Coffey A.J."/>
            <person name="Scherer S."/>
            <person name="McLay K."/>
            <person name="Muzny D."/>
            <person name="Platzer M."/>
            <person name="Howell G.R."/>
            <person name="Burrows C."/>
            <person name="Bird C.P."/>
            <person name="Frankish A."/>
            <person name="Lovell F.L."/>
            <person name="Howe K.L."/>
            <person name="Ashurst J.L."/>
            <person name="Fulton R.S."/>
            <person name="Sudbrak R."/>
            <person name="Wen G."/>
            <person name="Jones M.C."/>
            <person name="Hurles M.E."/>
            <person name="Andrews T.D."/>
            <person name="Scott C.E."/>
            <person name="Searle S."/>
            <person name="Ramser J."/>
            <person name="Whittaker A."/>
            <person name="Deadman R."/>
            <person name="Carter N.P."/>
            <person name="Hunt S.E."/>
            <person name="Chen R."/>
            <person name="Cree A."/>
            <person name="Gunaratne P."/>
            <person name="Havlak P."/>
            <person name="Hodgson A."/>
            <person name="Metzker M.L."/>
            <person name="Richards S."/>
            <person name="Scott G."/>
            <person name="Steffen D."/>
            <person name="Sodergren E."/>
            <person name="Wheeler D.A."/>
            <person name="Worley K.C."/>
            <person name="Ainscough R."/>
            <person name="Ambrose K.D."/>
            <person name="Ansari-Lari M.A."/>
            <person name="Aradhya S."/>
            <person name="Ashwell R.I."/>
            <person name="Babbage A.K."/>
            <person name="Bagguley C.L."/>
            <person name="Ballabio A."/>
            <person name="Banerjee R."/>
            <person name="Barker G.E."/>
            <person name="Barlow K.F."/>
            <person name="Barrett I.P."/>
            <person name="Bates K.N."/>
            <person name="Beare D.M."/>
            <person name="Beasley H."/>
            <person name="Beasley O."/>
            <person name="Beck A."/>
            <person name="Bethel G."/>
            <person name="Blechschmidt K."/>
            <person name="Brady N."/>
            <person name="Bray-Allen S."/>
            <person name="Bridgeman A.M."/>
            <person name="Brown A.J."/>
            <person name="Brown M.J."/>
            <person name="Bonnin D."/>
            <person name="Bruford E.A."/>
            <person name="Buhay C."/>
            <person name="Burch P."/>
            <person name="Burford D."/>
            <person name="Burgess J."/>
            <person name="Burrill W."/>
            <person name="Burton J."/>
            <person name="Bye J.M."/>
            <person name="Carder C."/>
            <person name="Carrel L."/>
            <person name="Chako J."/>
            <person name="Chapman J.C."/>
            <person name="Chavez D."/>
            <person name="Chen E."/>
            <person name="Chen G."/>
            <person name="Chen Y."/>
            <person name="Chen Z."/>
            <person name="Chinault C."/>
            <person name="Ciccodicola A."/>
            <person name="Clark S.Y."/>
            <person name="Clarke G."/>
            <person name="Clee C.M."/>
            <person name="Clegg S."/>
            <person name="Clerc-Blankenburg K."/>
            <person name="Clifford K."/>
            <person name="Cobley V."/>
            <person name="Cole C.G."/>
            <person name="Conquer J.S."/>
            <person name="Corby N."/>
            <person name="Connor R.E."/>
            <person name="David R."/>
            <person name="Davies J."/>
            <person name="Davis C."/>
            <person name="Davis J."/>
            <person name="Delgado O."/>
            <person name="Deshazo D."/>
            <person name="Dhami P."/>
            <person name="Ding Y."/>
            <person name="Dinh H."/>
            <person name="Dodsworth S."/>
            <person name="Draper H."/>
            <person name="Dugan-Rocha S."/>
            <person name="Dunham A."/>
            <person name="Dunn M."/>
            <person name="Durbin K.J."/>
            <person name="Dutta I."/>
            <person name="Eades T."/>
            <person name="Ellwood M."/>
            <person name="Emery-Cohen A."/>
            <person name="Errington H."/>
            <person name="Evans K.L."/>
            <person name="Faulkner L."/>
            <person name="Francis F."/>
            <person name="Frankland J."/>
            <person name="Fraser A.E."/>
            <person name="Galgoczy P."/>
            <person name="Gilbert J."/>
            <person name="Gill R."/>
            <person name="Gloeckner G."/>
            <person name="Gregory S.G."/>
            <person name="Gribble S."/>
            <person name="Griffiths C."/>
            <person name="Grocock R."/>
            <person name="Gu Y."/>
            <person name="Gwilliam R."/>
            <person name="Hamilton C."/>
            <person name="Hart E.A."/>
            <person name="Hawes A."/>
            <person name="Heath P.D."/>
            <person name="Heitmann K."/>
            <person name="Hennig S."/>
            <person name="Hernandez J."/>
            <person name="Hinzmann B."/>
            <person name="Ho S."/>
            <person name="Hoffs M."/>
            <person name="Howden P.J."/>
            <person name="Huckle E.J."/>
            <person name="Hume J."/>
            <person name="Hunt P.J."/>
            <person name="Hunt A.R."/>
            <person name="Isherwood J."/>
            <person name="Jacob L."/>
            <person name="Johnson D."/>
            <person name="Jones S."/>
            <person name="de Jong P.J."/>
            <person name="Joseph S.S."/>
            <person name="Keenan S."/>
            <person name="Kelly S."/>
            <person name="Kershaw J.K."/>
            <person name="Khan Z."/>
            <person name="Kioschis P."/>
            <person name="Klages S."/>
            <person name="Knights A.J."/>
            <person name="Kosiura A."/>
            <person name="Kovar-Smith C."/>
            <person name="Laird G.K."/>
            <person name="Langford C."/>
            <person name="Lawlor S."/>
            <person name="Leversha M."/>
            <person name="Lewis L."/>
            <person name="Liu W."/>
            <person name="Lloyd C."/>
            <person name="Lloyd D.M."/>
            <person name="Loulseged H."/>
            <person name="Loveland J.E."/>
            <person name="Lovell J.D."/>
            <person name="Lozado R."/>
            <person name="Lu J."/>
            <person name="Lyne R."/>
            <person name="Ma J."/>
            <person name="Maheshwari M."/>
            <person name="Matthews L.H."/>
            <person name="McDowall J."/>
            <person name="McLaren S."/>
            <person name="McMurray A."/>
            <person name="Meidl P."/>
            <person name="Meitinger T."/>
            <person name="Milne S."/>
            <person name="Miner G."/>
            <person name="Mistry S.L."/>
            <person name="Morgan M."/>
            <person name="Morris S."/>
            <person name="Mueller I."/>
            <person name="Mullikin J.C."/>
            <person name="Nguyen N."/>
            <person name="Nordsiek G."/>
            <person name="Nyakatura G."/>
            <person name="O'dell C.N."/>
            <person name="Okwuonu G."/>
            <person name="Palmer S."/>
            <person name="Pandian R."/>
            <person name="Parker D."/>
            <person name="Parrish J."/>
            <person name="Pasternak S."/>
            <person name="Patel D."/>
            <person name="Pearce A.V."/>
            <person name="Pearson D.M."/>
            <person name="Pelan S.E."/>
            <person name="Perez L."/>
            <person name="Porter K.M."/>
            <person name="Ramsey Y."/>
            <person name="Reichwald K."/>
            <person name="Rhodes S."/>
            <person name="Ridler K.A."/>
            <person name="Schlessinger D."/>
            <person name="Schueler M.G."/>
            <person name="Sehra H.K."/>
            <person name="Shaw-Smith C."/>
            <person name="Shen H."/>
            <person name="Sheridan E.M."/>
            <person name="Shownkeen R."/>
            <person name="Skuce C.D."/>
            <person name="Smith M.L."/>
            <person name="Sotheran E.C."/>
            <person name="Steingruber H.E."/>
            <person name="Steward C.A."/>
            <person name="Storey R."/>
            <person name="Swann R.M."/>
            <person name="Swarbreck D."/>
            <person name="Tabor P.E."/>
            <person name="Taudien S."/>
            <person name="Taylor T."/>
            <person name="Teague B."/>
            <person name="Thomas K."/>
            <person name="Thorpe A."/>
            <person name="Timms K."/>
            <person name="Tracey A."/>
            <person name="Trevanion S."/>
            <person name="Tromans A.C."/>
            <person name="d'Urso M."/>
            <person name="Verduzco D."/>
            <person name="Villasana D."/>
            <person name="Waldron L."/>
            <person name="Wall M."/>
            <person name="Wang Q."/>
            <person name="Warren J."/>
            <person name="Warry G.L."/>
            <person name="Wei X."/>
            <person name="West A."/>
            <person name="Whitehead S.L."/>
            <person name="Whiteley M.N."/>
            <person name="Wilkinson J.E."/>
            <person name="Willey D.L."/>
            <person name="Williams G."/>
            <person name="Williams L."/>
            <person name="Williamson A."/>
            <person name="Williamson H."/>
            <person name="Wilming L."/>
            <person name="Woodmansey R.L."/>
            <person name="Wray P.W."/>
            <person name="Yen J."/>
            <person name="Zhang J."/>
            <person name="Zhou J."/>
            <person name="Zoghbi H."/>
            <person name="Zorilla S."/>
            <person name="Buck D."/>
            <person name="Reinhardt R."/>
            <person name="Poustka A."/>
            <person name="Rosenthal A."/>
            <person name="Lehrach H."/>
            <person name="Meindl A."/>
            <person name="Minx P.J."/>
            <person name="Hillier L.W."/>
            <person name="Willard H.F."/>
            <person name="Wilson R.K."/>
            <person name="Waterston R.H."/>
            <person name="Rice C.M."/>
            <person name="Vaudin M."/>
            <person name="Coulson A."/>
            <person name="Nelson D.L."/>
            <person name="Weinstock G."/>
            <person name="Sulston J.E."/>
            <person name="Durbin R.M."/>
            <person name="Hubbard T."/>
            <person name="Gibbs R.A."/>
            <person name="Beck S."/>
            <person name="Rogers J."/>
            <person name="Bentley D.R."/>
        </authorList>
    </citation>
    <scope>NUCLEOTIDE SEQUENCE [LARGE SCALE GENOMIC DNA]</scope>
</reference>
<reference key="6">
    <citation type="journal article" date="2004" name="Genome Res.">
        <title>The status, quality, and expansion of the NIH full-length cDNA project: the Mammalian Gene Collection (MGC).</title>
        <authorList>
            <consortium name="The MGC Project Team"/>
        </authorList>
    </citation>
    <scope>NUCLEOTIDE SEQUENCE [LARGE SCALE MRNA] (ISOFORM 2)</scope>
    <scope>VARIANTS PHE-9 AND ALA-102</scope>
    <source>
        <tissue>Brain</tissue>
    </source>
</reference>
<reference key="7">
    <citation type="journal article" date="1999" name="Mol. Pharmacol.">
        <title>Spontaneous and gamma-aminobutyric acid (GABA)-activated GABA(A) receptor channels formed by epsilon subunit-containing isoforms.</title>
        <authorList>
            <person name="Neelands T.R."/>
            <person name="Fisher J.L."/>
            <person name="Bianchi M."/>
            <person name="Macdonald R.L."/>
        </authorList>
    </citation>
    <scope>FUNCTION</scope>
    <scope>TRANSPORTER ACTIVITY</scope>
    <scope>ACTIVITY REGULATION</scope>
    <scope>INTERACTION WITH GABRA1 AND GABRB3</scope>
    <scope>TISSUE SPECIFICITY</scope>
</reference>
<reference key="8">
    <citation type="journal article" date="2006" name="BMC Pharmacol.">
        <title>Impact of epsilon and theta subunits on pharmacological properties of alpha3beta1 GABAA receptors expressed in Xenopus oocytes.</title>
        <authorList>
            <person name="Ranna M."/>
            <person name="Sinkkonen S.T."/>
            <person name="Moeykkynen T."/>
            <person name="Uusi-Oukari M."/>
            <person name="Korpi E.R."/>
        </authorList>
    </citation>
    <scope>FUNCTION</scope>
    <scope>TRANSPORTER ACTIVITY</scope>
    <scope>ACTIVITY REGULATION</scope>
    <scope>INTERACTION WITH GABRA3; GABRB1 AND GABRT</scope>
</reference>
<name>GBRE_HUMAN</name>
<gene>
    <name evidence="18" type="primary">GABRE</name>
</gene>
<organism>
    <name type="scientific">Homo sapiens</name>
    <name type="common">Human</name>
    <dbReference type="NCBI Taxonomy" id="9606"/>
    <lineage>
        <taxon>Eukaryota</taxon>
        <taxon>Metazoa</taxon>
        <taxon>Chordata</taxon>
        <taxon>Craniata</taxon>
        <taxon>Vertebrata</taxon>
        <taxon>Euteleostomi</taxon>
        <taxon>Mammalia</taxon>
        <taxon>Eutheria</taxon>
        <taxon>Euarchontoglires</taxon>
        <taxon>Primates</taxon>
        <taxon>Haplorrhini</taxon>
        <taxon>Catarrhini</taxon>
        <taxon>Hominidae</taxon>
        <taxon>Homo</taxon>
    </lineage>
</organism>
<feature type="signal peptide" evidence="6">
    <location>
        <begin position="1"/>
        <end position="22"/>
    </location>
</feature>
<feature type="chain" id="PRO_0000000471" description="Gamma-aminobutyric acid receptor subunit epsilon" evidence="6">
    <location>
        <begin position="23"/>
        <end position="506"/>
    </location>
</feature>
<feature type="topological domain" description="Extracellular" evidence="16">
    <location>
        <begin position="23"/>
        <end position="280"/>
    </location>
</feature>
<feature type="transmembrane region" description="Helical" evidence="6">
    <location>
        <begin position="281"/>
        <end position="301"/>
    </location>
</feature>
<feature type="topological domain" description="Cytoplasmic" evidence="16">
    <location>
        <begin position="302"/>
        <end position="307"/>
    </location>
</feature>
<feature type="transmembrane region" description="Helical" evidence="6">
    <location>
        <begin position="308"/>
        <end position="327"/>
    </location>
</feature>
<feature type="topological domain" description="Extracellular" evidence="16">
    <location>
        <begin position="328"/>
        <end position="343"/>
    </location>
</feature>
<feature type="transmembrane region" description="Helical" evidence="6">
    <location>
        <begin position="344"/>
        <end position="364"/>
    </location>
</feature>
<feature type="topological domain" description="Cytoplasmic" evidence="16">
    <location>
        <begin position="365"/>
        <end position="485"/>
    </location>
</feature>
<feature type="transmembrane region" description="Helical" evidence="6">
    <location>
        <begin position="486"/>
        <end position="506"/>
    </location>
</feature>
<feature type="region of interest" description="Disordered" evidence="7">
    <location>
        <begin position="23"/>
        <end position="66"/>
    </location>
</feature>
<feature type="region of interest" description="Disordered" evidence="7">
    <location>
        <begin position="413"/>
        <end position="438"/>
    </location>
</feature>
<feature type="glycosylation site" description="N-linked (GlcNAc...) asparagine" evidence="6">
    <location>
        <position position="134"/>
    </location>
</feature>
<feature type="glycosylation site" description="N-linked (GlcNAc...) asparagine" evidence="6">
    <location>
        <position position="252"/>
    </location>
</feature>
<feature type="disulfide bond" evidence="4">
    <location>
        <begin position="195"/>
        <end position="209"/>
    </location>
</feature>
<feature type="splice variant" id="VSP_055776" description="In isoform 2." evidence="14">
    <original>I</original>
    <variation>M</variation>
    <location>
        <position position="365"/>
    </location>
</feature>
<feature type="splice variant" id="VSP_055777" description="In isoform 2." evidence="14">
    <location>
        <begin position="366"/>
        <end position="506"/>
    </location>
</feature>
<feature type="sequence variant" id="VAR_071089" description="In dbSNP:rs17855708." evidence="8">
    <original>L</original>
    <variation>F</variation>
    <location>
        <position position="9"/>
    </location>
</feature>
<feature type="sequence variant" id="VAR_048175" description="In dbSNP:rs1139916." evidence="8 10 11">
    <original>S</original>
    <variation>A</variation>
    <location>
        <position position="102"/>
    </location>
</feature>
<feature type="sequence conflict" description="In Ref. 2; CAA70903." evidence="16" ref="2">
    <original>F</original>
    <variation>L</variation>
    <location>
        <position position="245"/>
    </location>
</feature>
<feature type="sequence conflict" description="In Ref. 3; CAA68914." evidence="16" ref="3">
    <location>
        <position position="261"/>
    </location>
</feature>
<feature type="sequence conflict" description="In Ref. 2; CAA70903." evidence="16" ref="2">
    <original>G</original>
    <variation>A</variation>
    <location>
        <position position="471"/>
    </location>
</feature>
<feature type="sequence conflict" description="In Ref. 2; CAA70903." evidence="16" ref="2">
    <original>V</original>
    <variation>F</variation>
    <location>
        <position position="502"/>
    </location>
</feature>
<keyword id="KW-0025">Alternative splicing</keyword>
<keyword id="KW-1003">Cell membrane</keyword>
<keyword id="KW-0868">Chloride</keyword>
<keyword id="KW-0869">Chloride channel</keyword>
<keyword id="KW-1015">Disulfide bond</keyword>
<keyword id="KW-0325">Glycoprotein</keyword>
<keyword id="KW-0407">Ion channel</keyword>
<keyword id="KW-0406">Ion transport</keyword>
<keyword id="KW-0472">Membrane</keyword>
<keyword id="KW-0628">Postsynaptic cell membrane</keyword>
<keyword id="KW-1267">Proteomics identification</keyword>
<keyword id="KW-1185">Reference proteome</keyword>
<keyword id="KW-0732">Signal</keyword>
<keyword id="KW-0770">Synapse</keyword>
<keyword id="KW-0812">Transmembrane</keyword>
<keyword id="KW-1133">Transmembrane helix</keyword>
<keyword id="KW-0813">Transport</keyword>
<dbReference type="EMBL" id="U66661">
    <property type="protein sequence ID" value="AAB49284.1"/>
    <property type="molecule type" value="mRNA"/>
</dbReference>
<dbReference type="EMBL" id="Y09763">
    <property type="protein sequence ID" value="CAA70903.1"/>
    <property type="molecule type" value="Genomic_DNA"/>
</dbReference>
<dbReference type="EMBL" id="Y09764">
    <property type="protein sequence ID" value="CAA70903.1"/>
    <property type="status" value="JOINED"/>
    <property type="molecule type" value="Genomic_DNA"/>
</dbReference>
<dbReference type="EMBL" id="Y09765">
    <property type="protein sequence ID" value="CAA70904.1"/>
    <property type="molecule type" value="mRNA"/>
</dbReference>
<dbReference type="EMBL" id="Y07637">
    <property type="protein sequence ID" value="CAA68914.1"/>
    <property type="molecule type" value="mRNA"/>
</dbReference>
<dbReference type="EMBL" id="U92283">
    <property type="protein sequence ID" value="AAB94645.1"/>
    <property type="molecule type" value="Genomic_DNA"/>
</dbReference>
<dbReference type="EMBL" id="U92281">
    <property type="protein sequence ID" value="AAB94645.1"/>
    <property type="status" value="JOINED"/>
    <property type="molecule type" value="Genomic_DNA"/>
</dbReference>
<dbReference type="EMBL" id="U92282">
    <property type="protein sequence ID" value="AAB94645.1"/>
    <property type="status" value="JOINED"/>
    <property type="molecule type" value="Genomic_DNA"/>
</dbReference>
<dbReference type="EMBL" id="AF274855">
    <property type="status" value="NOT_ANNOTATED_CDS"/>
    <property type="molecule type" value="Genomic_DNA"/>
</dbReference>
<dbReference type="EMBL" id="BC026337">
    <property type="protein sequence ID" value="AAH26337.1"/>
    <property type="molecule type" value="mRNA"/>
</dbReference>
<dbReference type="EMBL" id="BC047108">
    <property type="protein sequence ID" value="AAH47108.1"/>
    <property type="molecule type" value="mRNA"/>
</dbReference>
<dbReference type="EMBL" id="BC059376">
    <property type="protein sequence ID" value="AAH59376.1"/>
    <property type="molecule type" value="mRNA"/>
</dbReference>
<dbReference type="CCDS" id="CCDS14703.1">
    <molecule id="P78334-1"/>
</dbReference>
<dbReference type="RefSeq" id="NP_004952.2">
    <molecule id="P78334-1"/>
    <property type="nucleotide sequence ID" value="NM_004961.3"/>
</dbReference>
<dbReference type="SMR" id="P78334"/>
<dbReference type="BioGRID" id="108838">
    <property type="interactions" value="51"/>
</dbReference>
<dbReference type="CORUM" id="P78334"/>
<dbReference type="FunCoup" id="P78334">
    <property type="interactions" value="540"/>
</dbReference>
<dbReference type="IntAct" id="P78334">
    <property type="interactions" value="33"/>
</dbReference>
<dbReference type="STRING" id="9606.ENSP00000359353"/>
<dbReference type="ChEMBL" id="CHEMBL2093872"/>
<dbReference type="DrugBank" id="DB12537">
    <property type="generic name" value="1,2-Benzodiazepine"/>
</dbReference>
<dbReference type="DrugBank" id="DB00546">
    <property type="generic name" value="Adinazolam"/>
</dbReference>
<dbReference type="DrugBank" id="DB00404">
    <property type="generic name" value="Alprazolam"/>
</dbReference>
<dbReference type="DrugBank" id="DB00543">
    <property type="generic name" value="Amoxapine"/>
</dbReference>
<dbReference type="DrugBank" id="DB11901">
    <property type="generic name" value="Apalutamide"/>
</dbReference>
<dbReference type="DrugBank" id="DB14719">
    <property type="generic name" value="Bentazepam"/>
</dbReference>
<dbReference type="DrugBank" id="DB11859">
    <property type="generic name" value="Brexanolone"/>
</dbReference>
<dbReference type="DrugBank" id="DB01558">
    <property type="generic name" value="Bromazepam"/>
</dbReference>
<dbReference type="DrugBank" id="DB09017">
    <property type="generic name" value="Brotizolam"/>
</dbReference>
<dbReference type="DrugBank" id="DB00237">
    <property type="generic name" value="Butabarbital"/>
</dbReference>
<dbReference type="DrugBank" id="DB00241">
    <property type="generic name" value="Butalbital"/>
</dbReference>
<dbReference type="DrugBank" id="DB01489">
    <property type="generic name" value="Camazepam"/>
</dbReference>
<dbReference type="DrugBank" id="DB00475">
    <property type="generic name" value="Chlordiazepoxide"/>
</dbReference>
<dbReference type="DrugBank" id="DB14715">
    <property type="generic name" value="Cinazepam"/>
</dbReference>
<dbReference type="DrugBank" id="DB01594">
    <property type="generic name" value="Cinolazepam"/>
</dbReference>
<dbReference type="DrugBank" id="DB00349">
    <property type="generic name" value="Clobazam"/>
</dbReference>
<dbReference type="DrugBank" id="DB01068">
    <property type="generic name" value="Clonazepam"/>
</dbReference>
<dbReference type="DrugBank" id="DB00628">
    <property type="generic name" value="Clorazepic acid"/>
</dbReference>
<dbReference type="DrugBank" id="DB01559">
    <property type="generic name" value="Clotiazepam"/>
</dbReference>
<dbReference type="DrugBank" id="DB01553">
    <property type="generic name" value="Cloxazolam"/>
</dbReference>
<dbReference type="DrugBank" id="DB01511">
    <property type="generic name" value="Delorazepam"/>
</dbReference>
<dbReference type="DrugBank" id="DB01189">
    <property type="generic name" value="Desflurane"/>
</dbReference>
<dbReference type="DrugBank" id="DB00829">
    <property type="generic name" value="Diazepam"/>
</dbReference>
<dbReference type="DrugBank" id="DB13837">
    <property type="generic name" value="Doxefazepam"/>
</dbReference>
<dbReference type="DrugBank" id="DB00228">
    <property type="generic name" value="Enflurane"/>
</dbReference>
<dbReference type="DrugBank" id="DB01215">
    <property type="generic name" value="Estazolam"/>
</dbReference>
<dbReference type="DrugBank" id="DB00402">
    <property type="generic name" value="Eszopiclone"/>
</dbReference>
<dbReference type="DrugBank" id="DB00898">
    <property type="generic name" value="Ethanol"/>
</dbReference>
<dbReference type="DrugBank" id="DB00189">
    <property type="generic name" value="Ethchlorvynol"/>
</dbReference>
<dbReference type="DrugBank" id="DB01545">
    <property type="generic name" value="Ethyl loflazepate"/>
</dbReference>
<dbReference type="DrugBank" id="DB09166">
    <property type="generic name" value="Etizolam"/>
</dbReference>
<dbReference type="DrugBank" id="DB00292">
    <property type="generic name" value="Etomidate"/>
</dbReference>
<dbReference type="DrugBank" id="DB01567">
    <property type="generic name" value="Fludiazepam"/>
</dbReference>
<dbReference type="DrugBank" id="DB01205">
    <property type="generic name" value="Flumazenil"/>
</dbReference>
<dbReference type="DrugBank" id="DB01544">
    <property type="generic name" value="Flunitrazepam"/>
</dbReference>
<dbReference type="DrugBank" id="DB00690">
    <property type="generic name" value="Flurazepam"/>
</dbReference>
<dbReference type="DrugBank" id="DB05087">
    <property type="generic name" value="Ganaxolone"/>
</dbReference>
<dbReference type="DrugBank" id="DB01437">
    <property type="generic name" value="Glutethimide"/>
</dbReference>
<dbReference type="DrugBank" id="DB00801">
    <property type="generic name" value="Halazepam"/>
</dbReference>
<dbReference type="DrugBank" id="DB01159">
    <property type="generic name" value="Halothane"/>
</dbReference>
<dbReference type="DrugBank" id="DB00753">
    <property type="generic name" value="Isoflurane"/>
</dbReference>
<dbReference type="DrugBank" id="DB01587">
    <property type="generic name" value="Ketazolam"/>
</dbReference>
<dbReference type="DrugBank" id="DB00555">
    <property type="generic name" value="Lamotrigine"/>
</dbReference>
<dbReference type="DrugBank" id="DB13643">
    <property type="generic name" value="Loprazolam"/>
</dbReference>
<dbReference type="DrugBank" id="DB00186">
    <property type="generic name" value="Lorazepam"/>
</dbReference>
<dbReference type="DrugBank" id="DB13872">
    <property type="generic name" value="Lormetazepam"/>
</dbReference>
<dbReference type="DrugBank" id="DB13437">
    <property type="generic name" value="Medazepam"/>
</dbReference>
<dbReference type="DrugBank" id="DB00603">
    <property type="generic name" value="Medroxyprogesterone acetate"/>
</dbReference>
<dbReference type="DrugBank" id="DB01043">
    <property type="generic name" value="Memantine"/>
</dbReference>
<dbReference type="DrugBank" id="DB00371">
    <property type="generic name" value="Meprobamate"/>
</dbReference>
<dbReference type="DrugBank" id="DB00463">
    <property type="generic name" value="Metharbital"/>
</dbReference>
<dbReference type="DrugBank" id="DB01028">
    <property type="generic name" value="Methoxyflurane"/>
</dbReference>
<dbReference type="DrugBank" id="DB01107">
    <property type="generic name" value="Methyprylon"/>
</dbReference>
<dbReference type="DrugBank" id="DB15489">
    <property type="generic name" value="Mexazolam"/>
</dbReference>
<dbReference type="DrugBank" id="DB00683">
    <property type="generic name" value="Midazolam"/>
</dbReference>
<dbReference type="DrugBank" id="DB01595">
    <property type="generic name" value="Nitrazepam"/>
</dbReference>
<dbReference type="DrugBank" id="DB14028">
    <property type="generic name" value="Nordazepam"/>
</dbReference>
<dbReference type="DrugBank" id="DB00842">
    <property type="generic name" value="Oxazepam"/>
</dbReference>
<dbReference type="DrugBank" id="DB14672">
    <property type="generic name" value="Oxazepam acetate"/>
</dbReference>
<dbReference type="DrugBank" id="DB00312">
    <property type="generic name" value="Pentobarbital"/>
</dbReference>
<dbReference type="DrugBank" id="DB00252">
    <property type="generic name" value="Phenytoin"/>
</dbReference>
<dbReference type="DrugBank" id="DB13335">
    <property type="generic name" value="Pinazepam"/>
</dbReference>
<dbReference type="DrugBank" id="DB01708">
    <property type="generic name" value="Prasterone"/>
</dbReference>
<dbReference type="DrugBank" id="DB01588">
    <property type="generic name" value="Prazepam"/>
</dbReference>
<dbReference type="DrugBank" id="DB00794">
    <property type="generic name" value="Primidone"/>
</dbReference>
<dbReference type="DrugBank" id="DB00818">
    <property type="generic name" value="Propofol"/>
</dbReference>
<dbReference type="DrugBank" id="DB01589">
    <property type="generic name" value="Quazepam"/>
</dbReference>
<dbReference type="DrugBank" id="DB12404">
    <property type="generic name" value="Remimazolam"/>
</dbReference>
<dbReference type="DrugBank" id="DB01236">
    <property type="generic name" value="Sevoflurane"/>
</dbReference>
<dbReference type="DrugBank" id="DB09118">
    <property type="generic name" value="Stiripentol"/>
</dbReference>
<dbReference type="DrugBank" id="DB00306">
    <property type="generic name" value="Talbutal"/>
</dbReference>
<dbReference type="DrugBank" id="DB01956">
    <property type="generic name" value="Taurine"/>
</dbReference>
<dbReference type="DrugBank" id="DB00231">
    <property type="generic name" value="Temazepam"/>
</dbReference>
<dbReference type="DrugBank" id="DB11582">
    <property type="generic name" value="Thiocolchicoside"/>
</dbReference>
<dbReference type="DrugBank" id="DB00897">
    <property type="generic name" value="Triazolam"/>
</dbReference>
<dbReference type="DrugBank" id="DB15490">
    <property type="generic name" value="Zuranolone"/>
</dbReference>
<dbReference type="DrugCentral" id="P78334"/>
<dbReference type="GlyCosmos" id="P78334">
    <property type="glycosylation" value="2 sites, No reported glycans"/>
</dbReference>
<dbReference type="GlyGen" id="P78334">
    <property type="glycosylation" value="2 sites"/>
</dbReference>
<dbReference type="iPTMnet" id="P78334"/>
<dbReference type="PhosphoSitePlus" id="P78334"/>
<dbReference type="BioMuta" id="GABRE"/>
<dbReference type="DMDM" id="13124728"/>
<dbReference type="MassIVE" id="P78334"/>
<dbReference type="PaxDb" id="9606-ENSP00000359353"/>
<dbReference type="PeptideAtlas" id="P78334"/>
<dbReference type="ProteomicsDB" id="18154"/>
<dbReference type="ProteomicsDB" id="57572">
    <molecule id="P78334-1"/>
</dbReference>
<dbReference type="ABCD" id="P78334">
    <property type="antibodies" value="1 sequenced antibody"/>
</dbReference>
<dbReference type="Antibodypedia" id="30712">
    <property type="antibodies" value="236 antibodies from 23 providers"/>
</dbReference>
<dbReference type="DNASU" id="2564"/>
<dbReference type="Ensembl" id="ENST00000370328.4">
    <molecule id="P78334-1"/>
    <property type="protein sequence ID" value="ENSP00000359353.3"/>
    <property type="gene ID" value="ENSG00000102287.19"/>
</dbReference>
<dbReference type="GeneID" id="2564"/>
<dbReference type="KEGG" id="hsa:2564"/>
<dbReference type="MANE-Select" id="ENST00000370328.4">
    <property type="protein sequence ID" value="ENSP00000359353.3"/>
    <property type="RefSeq nucleotide sequence ID" value="NM_004961.4"/>
    <property type="RefSeq protein sequence ID" value="NP_004952.2"/>
</dbReference>
<dbReference type="UCSC" id="uc004ffi.3">
    <molecule id="P78334-1"/>
    <property type="organism name" value="human"/>
</dbReference>
<dbReference type="AGR" id="HGNC:4085"/>
<dbReference type="CTD" id="2564"/>
<dbReference type="DisGeNET" id="2564"/>
<dbReference type="GeneCards" id="GABRE"/>
<dbReference type="HGNC" id="HGNC:4085">
    <property type="gene designation" value="GABRE"/>
</dbReference>
<dbReference type="HPA" id="ENSG00000102287">
    <property type="expression patterns" value="Tissue enhanced (adipose tissue, brain, heart muscle)"/>
</dbReference>
<dbReference type="MalaCards" id="GABRE"/>
<dbReference type="MIM" id="300093">
    <property type="type" value="gene"/>
</dbReference>
<dbReference type="neXtProt" id="NX_P78334"/>
<dbReference type="OpenTargets" id="ENSG00000102287"/>
<dbReference type="PharmGKB" id="PA28499"/>
<dbReference type="VEuPathDB" id="HostDB:ENSG00000102287"/>
<dbReference type="eggNOG" id="KOG3642">
    <property type="taxonomic scope" value="Eukaryota"/>
</dbReference>
<dbReference type="GeneTree" id="ENSGT00940000161201"/>
<dbReference type="HOGENOM" id="CLU_010920_2_0_1"/>
<dbReference type="InParanoid" id="P78334"/>
<dbReference type="OMA" id="RLFIHVY"/>
<dbReference type="OrthoDB" id="203862at2759"/>
<dbReference type="PAN-GO" id="P78334">
    <property type="GO annotations" value="19 GO annotations based on evolutionary models"/>
</dbReference>
<dbReference type="PhylomeDB" id="P78334"/>
<dbReference type="TreeFam" id="TF315453"/>
<dbReference type="PathwayCommons" id="P78334"/>
<dbReference type="SignaLink" id="P78334"/>
<dbReference type="BioGRID-ORCS" id="2564">
    <property type="hits" value="4 hits in 789 CRISPR screens"/>
</dbReference>
<dbReference type="ChiTaRS" id="GABRE">
    <property type="organism name" value="human"/>
</dbReference>
<dbReference type="GeneWiki" id="GABRE"/>
<dbReference type="GenomeRNAi" id="2564"/>
<dbReference type="Pharos" id="P78334">
    <property type="development level" value="Tclin"/>
</dbReference>
<dbReference type="PRO" id="PR:P78334"/>
<dbReference type="Proteomes" id="UP000005640">
    <property type="component" value="Chromosome X"/>
</dbReference>
<dbReference type="RNAct" id="P78334">
    <property type="molecule type" value="protein"/>
</dbReference>
<dbReference type="Bgee" id="ENSG00000102287">
    <property type="expression patterns" value="Expressed in lower esophagus mucosa and 150 other cell types or tissues"/>
</dbReference>
<dbReference type="ExpressionAtlas" id="P78334">
    <property type="expression patterns" value="baseline and differential"/>
</dbReference>
<dbReference type="GO" id="GO:0034707">
    <property type="term" value="C:chloride channel complex"/>
    <property type="evidence" value="ECO:0007669"/>
    <property type="project" value="UniProtKB-KW"/>
</dbReference>
<dbReference type="GO" id="GO:0032590">
    <property type="term" value="C:dendrite membrane"/>
    <property type="evidence" value="ECO:0000318"/>
    <property type="project" value="GO_Central"/>
</dbReference>
<dbReference type="GO" id="GO:1902711">
    <property type="term" value="C:GABA-A receptor complex"/>
    <property type="evidence" value="ECO:0000314"/>
    <property type="project" value="GO_Central"/>
</dbReference>
<dbReference type="GO" id="GO:0098794">
    <property type="term" value="C:postsynapse"/>
    <property type="evidence" value="ECO:0000318"/>
    <property type="project" value="GO_Central"/>
</dbReference>
<dbReference type="GO" id="GO:0045211">
    <property type="term" value="C:postsynaptic membrane"/>
    <property type="evidence" value="ECO:0007669"/>
    <property type="project" value="UniProtKB-SubCell"/>
</dbReference>
<dbReference type="GO" id="GO:0004890">
    <property type="term" value="F:GABA-A receptor activity"/>
    <property type="evidence" value="ECO:0000314"/>
    <property type="project" value="UniProtKB"/>
</dbReference>
<dbReference type="GO" id="GO:0022851">
    <property type="term" value="F:GABA-gated chloride ion channel activity"/>
    <property type="evidence" value="ECO:0000314"/>
    <property type="project" value="UniProtKB"/>
</dbReference>
<dbReference type="GO" id="GO:1902476">
    <property type="term" value="P:chloride transmembrane transport"/>
    <property type="evidence" value="ECO:0000318"/>
    <property type="project" value="GO_Central"/>
</dbReference>
<dbReference type="GO" id="GO:0007214">
    <property type="term" value="P:gamma-aminobutyric acid signaling pathway"/>
    <property type="evidence" value="ECO:0000318"/>
    <property type="project" value="GO_Central"/>
</dbReference>
<dbReference type="GO" id="GO:1904862">
    <property type="term" value="P:inhibitory synapse assembly"/>
    <property type="evidence" value="ECO:0000318"/>
    <property type="project" value="GO_Central"/>
</dbReference>
<dbReference type="GO" id="GO:2001226">
    <property type="term" value="P:negative regulation of chloride transport"/>
    <property type="evidence" value="ECO:0000314"/>
    <property type="project" value="GO_Central"/>
</dbReference>
<dbReference type="GO" id="GO:0051932">
    <property type="term" value="P:synaptic transmission, GABAergic"/>
    <property type="evidence" value="ECO:0000318"/>
    <property type="project" value="GO_Central"/>
</dbReference>
<dbReference type="CDD" id="cd19002">
    <property type="entry name" value="LGIC_ECD_GABAAR_E"/>
    <property type="match status" value="1"/>
</dbReference>
<dbReference type="CDD" id="cd19057">
    <property type="entry name" value="LGIC_TM_GABAAR_epsilon"/>
    <property type="match status" value="1"/>
</dbReference>
<dbReference type="FunFam" id="1.20.58.390:FF:000032">
    <property type="entry name" value="gamma-aminobutyric acid receptor subunit epsilon"/>
    <property type="match status" value="1"/>
</dbReference>
<dbReference type="FunFam" id="2.70.170.10:FF:000003">
    <property type="entry name" value="Putative gamma-aminobutyric acid receptor subunit gamma-2"/>
    <property type="match status" value="1"/>
</dbReference>
<dbReference type="Gene3D" id="2.70.170.10">
    <property type="entry name" value="Neurotransmitter-gated ion-channel ligand-binding domain"/>
    <property type="match status" value="1"/>
</dbReference>
<dbReference type="Gene3D" id="1.20.58.390">
    <property type="entry name" value="Neurotransmitter-gated ion-channel transmembrane domain"/>
    <property type="match status" value="1"/>
</dbReference>
<dbReference type="InterPro" id="IPR006028">
    <property type="entry name" value="GABAA/Glycine_rcpt"/>
</dbReference>
<dbReference type="InterPro" id="IPR008099">
    <property type="entry name" value="GABAAe_rcpt"/>
</dbReference>
<dbReference type="InterPro" id="IPR006202">
    <property type="entry name" value="Neur_chan_lig-bd"/>
</dbReference>
<dbReference type="InterPro" id="IPR036734">
    <property type="entry name" value="Neur_chan_lig-bd_sf"/>
</dbReference>
<dbReference type="InterPro" id="IPR006201">
    <property type="entry name" value="Neur_channel"/>
</dbReference>
<dbReference type="InterPro" id="IPR036719">
    <property type="entry name" value="Neuro-gated_channel_TM_sf"/>
</dbReference>
<dbReference type="InterPro" id="IPR038050">
    <property type="entry name" value="Neuro_actylchol_rec"/>
</dbReference>
<dbReference type="InterPro" id="IPR006029">
    <property type="entry name" value="Neurotrans-gated_channel_TM"/>
</dbReference>
<dbReference type="InterPro" id="IPR018000">
    <property type="entry name" value="Neurotransmitter_ion_chnl_CS"/>
</dbReference>
<dbReference type="NCBIfam" id="TIGR00860">
    <property type="entry name" value="LIC"/>
    <property type="match status" value="1"/>
</dbReference>
<dbReference type="PANTHER" id="PTHR18945">
    <property type="entry name" value="NEUROTRANSMITTER GATED ION CHANNEL"/>
    <property type="match status" value="1"/>
</dbReference>
<dbReference type="Pfam" id="PF02931">
    <property type="entry name" value="Neur_chan_LBD"/>
    <property type="match status" value="1"/>
</dbReference>
<dbReference type="Pfam" id="PF02932">
    <property type="entry name" value="Neur_chan_memb"/>
    <property type="match status" value="1"/>
</dbReference>
<dbReference type="PRINTS" id="PR00253">
    <property type="entry name" value="GABAARECEPTR"/>
</dbReference>
<dbReference type="PRINTS" id="PR01723">
    <property type="entry name" value="GABAAREPSLON"/>
</dbReference>
<dbReference type="PRINTS" id="PR00252">
    <property type="entry name" value="NRIONCHANNEL"/>
</dbReference>
<dbReference type="SUPFAM" id="SSF90112">
    <property type="entry name" value="Neurotransmitter-gated ion-channel transmembrane pore"/>
    <property type="match status" value="1"/>
</dbReference>
<dbReference type="SUPFAM" id="SSF63712">
    <property type="entry name" value="Nicotinic receptor ligand binding domain-like"/>
    <property type="match status" value="1"/>
</dbReference>
<dbReference type="PROSITE" id="PS00236">
    <property type="entry name" value="NEUROTR_ION_CHANNEL"/>
    <property type="match status" value="1"/>
</dbReference>
<accession>P78334</accession>
<accession>E7ET93</accession>
<accession>O15345</accession>
<accession>O15346</accession>
<accession>Q6PCD2</accession>
<accession>Q99520</accession>
<evidence type="ECO:0000250" key="1">
    <source>
        <dbReference type="UniProtKB" id="P08219"/>
    </source>
</evidence>
<evidence type="ECO:0000250" key="2">
    <source>
        <dbReference type="UniProtKB" id="P14867"/>
    </source>
</evidence>
<evidence type="ECO:0000250" key="3">
    <source>
        <dbReference type="UniProtKB" id="P18507"/>
    </source>
</evidence>
<evidence type="ECO:0000250" key="4">
    <source>
        <dbReference type="UniProtKB" id="P28472"/>
    </source>
</evidence>
<evidence type="ECO:0000250" key="5">
    <source>
        <dbReference type="UniProtKB" id="P47870"/>
    </source>
</evidence>
<evidence type="ECO:0000255" key="6"/>
<evidence type="ECO:0000256" key="7">
    <source>
        <dbReference type="SAM" id="MobiDB-lite"/>
    </source>
</evidence>
<evidence type="ECO:0000269" key="8">
    <source>
    </source>
</evidence>
<evidence type="ECO:0000269" key="9">
    <source>
    </source>
</evidence>
<evidence type="ECO:0000269" key="10">
    <source>
    </source>
</evidence>
<evidence type="ECO:0000269" key="11">
    <source>
    </source>
</evidence>
<evidence type="ECO:0000269" key="12">
    <source>
    </source>
</evidence>
<evidence type="ECO:0000269" key="13">
    <source>
    </source>
</evidence>
<evidence type="ECO:0000303" key="14">
    <source>
    </source>
</evidence>
<evidence type="ECO:0000303" key="15">
    <source>
    </source>
</evidence>
<evidence type="ECO:0000305" key="16"/>
<evidence type="ECO:0000305" key="17">
    <source>
    </source>
</evidence>
<evidence type="ECO:0000312" key="18">
    <source>
        <dbReference type="HGNC" id="HGNC:4085"/>
    </source>
</evidence>